<name>SAHH_RHOPS</name>
<evidence type="ECO:0000255" key="1">
    <source>
        <dbReference type="HAMAP-Rule" id="MF_00563"/>
    </source>
</evidence>
<reference key="1">
    <citation type="submission" date="2006-03" db="EMBL/GenBank/DDBJ databases">
        <title>Complete sequence of Rhodopseudomonas palustris BisB5.</title>
        <authorList>
            <consortium name="US DOE Joint Genome Institute"/>
            <person name="Copeland A."/>
            <person name="Lucas S."/>
            <person name="Lapidus A."/>
            <person name="Barry K."/>
            <person name="Detter J.C."/>
            <person name="Glavina del Rio T."/>
            <person name="Hammon N."/>
            <person name="Israni S."/>
            <person name="Dalin E."/>
            <person name="Tice H."/>
            <person name="Pitluck S."/>
            <person name="Chain P."/>
            <person name="Malfatti S."/>
            <person name="Shin M."/>
            <person name="Vergez L."/>
            <person name="Schmutz J."/>
            <person name="Larimer F."/>
            <person name="Land M."/>
            <person name="Hauser L."/>
            <person name="Pelletier D.A."/>
            <person name="Kyrpides N."/>
            <person name="Lykidis A."/>
            <person name="Oda Y."/>
            <person name="Harwood C.S."/>
            <person name="Richardson P."/>
        </authorList>
    </citation>
    <scope>NUCLEOTIDE SEQUENCE [LARGE SCALE GENOMIC DNA]</scope>
    <source>
        <strain>BisB5</strain>
    </source>
</reference>
<protein>
    <recommendedName>
        <fullName evidence="1">Adenosylhomocysteinase</fullName>
        <ecNumber evidence="1">3.13.2.1</ecNumber>
    </recommendedName>
    <alternativeName>
        <fullName evidence="1">S-adenosyl-L-homocysteine hydrolase</fullName>
        <shortName evidence="1">AdoHcyase</shortName>
    </alternativeName>
</protein>
<comment type="function">
    <text evidence="1">May play a key role in the regulation of the intracellular concentration of adenosylhomocysteine.</text>
</comment>
<comment type="catalytic activity">
    <reaction evidence="1">
        <text>S-adenosyl-L-homocysteine + H2O = L-homocysteine + adenosine</text>
        <dbReference type="Rhea" id="RHEA:21708"/>
        <dbReference type="ChEBI" id="CHEBI:15377"/>
        <dbReference type="ChEBI" id="CHEBI:16335"/>
        <dbReference type="ChEBI" id="CHEBI:57856"/>
        <dbReference type="ChEBI" id="CHEBI:58199"/>
        <dbReference type="EC" id="3.13.2.1"/>
    </reaction>
</comment>
<comment type="cofactor">
    <cofactor evidence="1">
        <name>NAD(+)</name>
        <dbReference type="ChEBI" id="CHEBI:57540"/>
    </cofactor>
    <text evidence="1">Binds 1 NAD(+) per subunit.</text>
</comment>
<comment type="pathway">
    <text evidence="1">Amino-acid biosynthesis; L-homocysteine biosynthesis; L-homocysteine from S-adenosyl-L-homocysteine: step 1/1.</text>
</comment>
<comment type="subcellular location">
    <subcellularLocation>
        <location evidence="1">Cytoplasm</location>
    </subcellularLocation>
</comment>
<comment type="similarity">
    <text evidence="1">Belongs to the adenosylhomocysteinase family.</text>
</comment>
<gene>
    <name evidence="1" type="primary">ahcY</name>
    <name type="ordered locus">RPD_1597</name>
</gene>
<proteinExistence type="inferred from homology"/>
<feature type="chain" id="PRO_1000024757" description="Adenosylhomocysteinase">
    <location>
        <begin position="1"/>
        <end position="471"/>
    </location>
</feature>
<feature type="binding site" evidence="1">
    <location>
        <position position="58"/>
    </location>
    <ligand>
        <name>substrate</name>
    </ligand>
</feature>
<feature type="binding site" evidence="1">
    <location>
        <position position="133"/>
    </location>
    <ligand>
        <name>substrate</name>
    </ligand>
</feature>
<feature type="binding site" evidence="1">
    <location>
        <position position="195"/>
    </location>
    <ligand>
        <name>substrate</name>
    </ligand>
</feature>
<feature type="binding site" evidence="1">
    <location>
        <begin position="196"/>
        <end position="198"/>
    </location>
    <ligand>
        <name>NAD(+)</name>
        <dbReference type="ChEBI" id="CHEBI:57540"/>
    </ligand>
</feature>
<feature type="binding site" evidence="1">
    <location>
        <position position="225"/>
    </location>
    <ligand>
        <name>substrate</name>
    </ligand>
</feature>
<feature type="binding site" evidence="1">
    <location>
        <position position="229"/>
    </location>
    <ligand>
        <name>substrate</name>
    </ligand>
</feature>
<feature type="binding site" evidence="1">
    <location>
        <position position="230"/>
    </location>
    <ligand>
        <name>NAD(+)</name>
        <dbReference type="ChEBI" id="CHEBI:57540"/>
    </ligand>
</feature>
<feature type="binding site" evidence="1">
    <location>
        <begin position="259"/>
        <end position="264"/>
    </location>
    <ligand>
        <name>NAD(+)</name>
        <dbReference type="ChEBI" id="CHEBI:57540"/>
    </ligand>
</feature>
<feature type="binding site" evidence="1">
    <location>
        <position position="282"/>
    </location>
    <ligand>
        <name>NAD(+)</name>
        <dbReference type="ChEBI" id="CHEBI:57540"/>
    </ligand>
</feature>
<feature type="binding site" evidence="1">
    <location>
        <position position="317"/>
    </location>
    <ligand>
        <name>NAD(+)</name>
        <dbReference type="ChEBI" id="CHEBI:57540"/>
    </ligand>
</feature>
<feature type="binding site" evidence="1">
    <location>
        <begin position="338"/>
        <end position="340"/>
    </location>
    <ligand>
        <name>NAD(+)</name>
        <dbReference type="ChEBI" id="CHEBI:57540"/>
    </ligand>
</feature>
<feature type="binding site" evidence="1">
    <location>
        <position position="383"/>
    </location>
    <ligand>
        <name>NAD(+)</name>
        <dbReference type="ChEBI" id="CHEBI:57540"/>
    </ligand>
</feature>
<keyword id="KW-0963">Cytoplasm</keyword>
<keyword id="KW-0378">Hydrolase</keyword>
<keyword id="KW-0520">NAD</keyword>
<keyword id="KW-0554">One-carbon metabolism</keyword>
<accession>Q13AQ5</accession>
<dbReference type="EC" id="3.13.2.1" evidence="1"/>
<dbReference type="EMBL" id="CP000283">
    <property type="protein sequence ID" value="ABE38834.1"/>
    <property type="molecule type" value="Genomic_DNA"/>
</dbReference>
<dbReference type="SMR" id="Q13AQ5"/>
<dbReference type="STRING" id="316057.RPD_1597"/>
<dbReference type="KEGG" id="rpd:RPD_1597"/>
<dbReference type="eggNOG" id="COG0499">
    <property type="taxonomic scope" value="Bacteria"/>
</dbReference>
<dbReference type="HOGENOM" id="CLU_025194_2_1_5"/>
<dbReference type="BioCyc" id="RPAL316057:RPD_RS08075-MONOMER"/>
<dbReference type="UniPathway" id="UPA00314">
    <property type="reaction ID" value="UER00076"/>
</dbReference>
<dbReference type="Proteomes" id="UP000001818">
    <property type="component" value="Chromosome"/>
</dbReference>
<dbReference type="GO" id="GO:0005829">
    <property type="term" value="C:cytosol"/>
    <property type="evidence" value="ECO:0007669"/>
    <property type="project" value="TreeGrafter"/>
</dbReference>
<dbReference type="GO" id="GO:0004013">
    <property type="term" value="F:adenosylhomocysteinase activity"/>
    <property type="evidence" value="ECO:0007669"/>
    <property type="project" value="UniProtKB-UniRule"/>
</dbReference>
<dbReference type="GO" id="GO:0071269">
    <property type="term" value="P:L-homocysteine biosynthetic process"/>
    <property type="evidence" value="ECO:0007669"/>
    <property type="project" value="UniProtKB-UniRule"/>
</dbReference>
<dbReference type="GO" id="GO:0006730">
    <property type="term" value="P:one-carbon metabolic process"/>
    <property type="evidence" value="ECO:0007669"/>
    <property type="project" value="UniProtKB-KW"/>
</dbReference>
<dbReference type="GO" id="GO:0033353">
    <property type="term" value="P:S-adenosylmethionine cycle"/>
    <property type="evidence" value="ECO:0007669"/>
    <property type="project" value="TreeGrafter"/>
</dbReference>
<dbReference type="CDD" id="cd00401">
    <property type="entry name" value="SAHH"/>
    <property type="match status" value="1"/>
</dbReference>
<dbReference type="FunFam" id="3.40.50.720:FF:000004">
    <property type="entry name" value="Adenosylhomocysteinase"/>
    <property type="match status" value="1"/>
</dbReference>
<dbReference type="Gene3D" id="3.40.50.1480">
    <property type="entry name" value="Adenosylhomocysteinase-like"/>
    <property type="match status" value="1"/>
</dbReference>
<dbReference type="Gene3D" id="3.40.50.720">
    <property type="entry name" value="NAD(P)-binding Rossmann-like Domain"/>
    <property type="match status" value="1"/>
</dbReference>
<dbReference type="HAMAP" id="MF_00563">
    <property type="entry name" value="AdoHcyase"/>
    <property type="match status" value="1"/>
</dbReference>
<dbReference type="InterPro" id="IPR042172">
    <property type="entry name" value="Adenosylhomocyst_ase-like_sf"/>
</dbReference>
<dbReference type="InterPro" id="IPR000043">
    <property type="entry name" value="Adenosylhomocysteinase-like"/>
</dbReference>
<dbReference type="InterPro" id="IPR015878">
    <property type="entry name" value="Ado_hCys_hydrolase_NAD-bd"/>
</dbReference>
<dbReference type="InterPro" id="IPR036291">
    <property type="entry name" value="NAD(P)-bd_dom_sf"/>
</dbReference>
<dbReference type="InterPro" id="IPR020082">
    <property type="entry name" value="S-Ado-L-homoCys_hydrolase_CS"/>
</dbReference>
<dbReference type="NCBIfam" id="TIGR00936">
    <property type="entry name" value="ahcY"/>
    <property type="match status" value="1"/>
</dbReference>
<dbReference type="NCBIfam" id="NF004005">
    <property type="entry name" value="PRK05476.2-3"/>
    <property type="match status" value="1"/>
</dbReference>
<dbReference type="PANTHER" id="PTHR23420">
    <property type="entry name" value="ADENOSYLHOMOCYSTEINASE"/>
    <property type="match status" value="1"/>
</dbReference>
<dbReference type="PANTHER" id="PTHR23420:SF0">
    <property type="entry name" value="ADENOSYLHOMOCYSTEINASE"/>
    <property type="match status" value="1"/>
</dbReference>
<dbReference type="Pfam" id="PF05221">
    <property type="entry name" value="AdoHcyase"/>
    <property type="match status" value="1"/>
</dbReference>
<dbReference type="Pfam" id="PF00670">
    <property type="entry name" value="AdoHcyase_NAD"/>
    <property type="match status" value="1"/>
</dbReference>
<dbReference type="PIRSF" id="PIRSF001109">
    <property type="entry name" value="Ad_hcy_hydrolase"/>
    <property type="match status" value="1"/>
</dbReference>
<dbReference type="SMART" id="SM00996">
    <property type="entry name" value="AdoHcyase"/>
    <property type="match status" value="1"/>
</dbReference>
<dbReference type="SMART" id="SM00997">
    <property type="entry name" value="AdoHcyase_NAD"/>
    <property type="match status" value="1"/>
</dbReference>
<dbReference type="SUPFAM" id="SSF52283">
    <property type="entry name" value="Formate/glycerate dehydrogenase catalytic domain-like"/>
    <property type="match status" value="1"/>
</dbReference>
<dbReference type="SUPFAM" id="SSF51735">
    <property type="entry name" value="NAD(P)-binding Rossmann-fold domains"/>
    <property type="match status" value="1"/>
</dbReference>
<dbReference type="PROSITE" id="PS00738">
    <property type="entry name" value="ADOHCYASE_1"/>
    <property type="match status" value="1"/>
</dbReference>
<dbReference type="PROSITE" id="PS00739">
    <property type="entry name" value="ADOHCYASE_2"/>
    <property type="match status" value="1"/>
</dbReference>
<organism>
    <name type="scientific">Rhodopseudomonas palustris (strain BisB5)</name>
    <dbReference type="NCBI Taxonomy" id="316057"/>
    <lineage>
        <taxon>Bacteria</taxon>
        <taxon>Pseudomonadati</taxon>
        <taxon>Pseudomonadota</taxon>
        <taxon>Alphaproteobacteria</taxon>
        <taxon>Hyphomicrobiales</taxon>
        <taxon>Nitrobacteraceae</taxon>
        <taxon>Rhodopseudomonas</taxon>
    </lineage>
</organism>
<sequence length="471" mass="51754">MTAKFTDYIVKDIGLAEFGRKEISLAETEMPGLMATREEYGPKQPLKGARIAGSLHMTIQTAVLIETLTALGADVRWVSCNIYSTQDHAAAAIAAAGIPVFAIKGESLEDYWDYTARMFDWHGGGTPNMILDDGGDATMYVHLGLRAENGDTAFLDKPGSDEEVIFFALLKKQLKEKPKGYFAEIAKNIRGVSEETTTGVHRLYDMQKAGTLLWPAINVNDSVTKSKFDNLYGCRESLVDGIRRGTDVMMSGKVAMVAGFGDVGKGSAASLRQAGARVMVSEVDPICALQAAMEGYQVVTMEDAAPIADIFVTATGNKDIITIEHMRAMKDRAIVCNIGHFDNEIQIAHLKNLKWDNIKPQVDEITFPDGKRMILLSEGRLVNLGNATGHPSFVMSASFTNQTLAQIELFANNKDGKYKKEVYVLPKSLDEKVARLHLAKIGVKLTELRKDQADYIGVKVEGPFKADHYRY</sequence>